<feature type="chain" id="PRO_1000045417" description="High frequency lysogenization protein HflD homolog">
    <location>
        <begin position="1"/>
        <end position="203"/>
    </location>
</feature>
<name>HFLD_AERS4</name>
<keyword id="KW-0997">Cell inner membrane</keyword>
<keyword id="KW-1003">Cell membrane</keyword>
<keyword id="KW-0963">Cytoplasm</keyword>
<keyword id="KW-0472">Membrane</keyword>
<gene>
    <name evidence="1" type="primary">hflD</name>
    <name type="ordered locus">ASA_1390</name>
</gene>
<protein>
    <recommendedName>
        <fullName evidence="1">High frequency lysogenization protein HflD homolog</fullName>
    </recommendedName>
</protein>
<proteinExistence type="inferred from homology"/>
<sequence length="203" mass="22847">MSDKFQDRTMAFAGICQAAYLVQKVARDGTCDEASLRESLQSVLVTDPKQPLEVFGNHLAIRDGYRALVEQLGSDGSQKNAELTRYVVSLIALERKLAKRKDILNMLGERISQIGRQQQHFDLLDEQILANMASIYSDLISPIGPRIQIAGTPLFLQQPLVQHKVRALLLAGIRACVLWRQLDGSRTQIIFARKKMVELAKRF</sequence>
<reference key="1">
    <citation type="journal article" date="2008" name="BMC Genomics">
        <title>The genome of Aeromonas salmonicida subsp. salmonicida A449: insights into the evolution of a fish pathogen.</title>
        <authorList>
            <person name="Reith M.E."/>
            <person name="Singh R.K."/>
            <person name="Curtis B."/>
            <person name="Boyd J.M."/>
            <person name="Bouevitch A."/>
            <person name="Kimball J."/>
            <person name="Munholland J."/>
            <person name="Murphy C."/>
            <person name="Sarty D."/>
            <person name="Williams J."/>
            <person name="Nash J.H."/>
            <person name="Johnson S.C."/>
            <person name="Brown L.L."/>
        </authorList>
    </citation>
    <scope>NUCLEOTIDE SEQUENCE [LARGE SCALE GENOMIC DNA]</scope>
    <source>
        <strain>A449</strain>
    </source>
</reference>
<comment type="subcellular location">
    <subcellularLocation>
        <location>Cytoplasm</location>
    </subcellularLocation>
    <subcellularLocation>
        <location evidence="1">Cell inner membrane</location>
        <topology evidence="1">Peripheral membrane protein</topology>
        <orientation evidence="1">Cytoplasmic side</orientation>
    </subcellularLocation>
</comment>
<comment type="similarity">
    <text evidence="1">Belongs to the HflD family.</text>
</comment>
<organism>
    <name type="scientific">Aeromonas salmonicida (strain A449)</name>
    <dbReference type="NCBI Taxonomy" id="382245"/>
    <lineage>
        <taxon>Bacteria</taxon>
        <taxon>Pseudomonadati</taxon>
        <taxon>Pseudomonadota</taxon>
        <taxon>Gammaproteobacteria</taxon>
        <taxon>Aeromonadales</taxon>
        <taxon>Aeromonadaceae</taxon>
        <taxon>Aeromonas</taxon>
    </lineage>
</organism>
<accession>A4SKR9</accession>
<evidence type="ECO:0000255" key="1">
    <source>
        <dbReference type="HAMAP-Rule" id="MF_00695"/>
    </source>
</evidence>
<dbReference type="EMBL" id="CP000644">
    <property type="protein sequence ID" value="ABO89491.1"/>
    <property type="molecule type" value="Genomic_DNA"/>
</dbReference>
<dbReference type="RefSeq" id="WP_005319180.1">
    <property type="nucleotide sequence ID" value="NC_009348.1"/>
</dbReference>
<dbReference type="SMR" id="A4SKR9"/>
<dbReference type="STRING" id="29491.GCA_000820065_03308"/>
<dbReference type="KEGG" id="asa:ASA_1390"/>
<dbReference type="PATRIC" id="fig|382245.13.peg.1385"/>
<dbReference type="eggNOG" id="COG2915">
    <property type="taxonomic scope" value="Bacteria"/>
</dbReference>
<dbReference type="HOGENOM" id="CLU_098920_0_0_6"/>
<dbReference type="Proteomes" id="UP000000225">
    <property type="component" value="Chromosome"/>
</dbReference>
<dbReference type="GO" id="GO:0005737">
    <property type="term" value="C:cytoplasm"/>
    <property type="evidence" value="ECO:0007669"/>
    <property type="project" value="UniProtKB-SubCell"/>
</dbReference>
<dbReference type="GO" id="GO:0005886">
    <property type="term" value="C:plasma membrane"/>
    <property type="evidence" value="ECO:0007669"/>
    <property type="project" value="UniProtKB-SubCell"/>
</dbReference>
<dbReference type="Gene3D" id="1.10.3890.10">
    <property type="entry name" value="HflD-like"/>
    <property type="match status" value="1"/>
</dbReference>
<dbReference type="HAMAP" id="MF_00695">
    <property type="entry name" value="HflD_protein"/>
    <property type="match status" value="1"/>
</dbReference>
<dbReference type="InterPro" id="IPR007451">
    <property type="entry name" value="HflD"/>
</dbReference>
<dbReference type="InterPro" id="IPR035932">
    <property type="entry name" value="HflD-like_sf"/>
</dbReference>
<dbReference type="NCBIfam" id="NF001246">
    <property type="entry name" value="PRK00218.1-2"/>
    <property type="match status" value="1"/>
</dbReference>
<dbReference type="NCBIfam" id="NF001248">
    <property type="entry name" value="PRK00218.1-4"/>
    <property type="match status" value="1"/>
</dbReference>
<dbReference type="PANTHER" id="PTHR38100">
    <property type="entry name" value="HIGH FREQUENCY LYSOGENIZATION PROTEIN HFLD"/>
    <property type="match status" value="1"/>
</dbReference>
<dbReference type="PANTHER" id="PTHR38100:SF1">
    <property type="entry name" value="HIGH FREQUENCY LYSOGENIZATION PROTEIN HFLD"/>
    <property type="match status" value="1"/>
</dbReference>
<dbReference type="Pfam" id="PF04356">
    <property type="entry name" value="DUF489"/>
    <property type="match status" value="1"/>
</dbReference>
<dbReference type="SUPFAM" id="SSF101322">
    <property type="entry name" value="YcfC-like"/>
    <property type="match status" value="1"/>
</dbReference>